<evidence type="ECO:0000255" key="1">
    <source>
        <dbReference type="HAMAP-Rule" id="MF_01521"/>
    </source>
</evidence>
<organism>
    <name type="scientific">Rhodospirillum rubrum (strain ATCC 11170 / ATH 1.1.1 / DSM 467 / LMG 4362 / NCIMB 8255 / S1)</name>
    <dbReference type="NCBI Taxonomy" id="269796"/>
    <lineage>
        <taxon>Bacteria</taxon>
        <taxon>Pseudomonadati</taxon>
        <taxon>Pseudomonadota</taxon>
        <taxon>Alphaproteobacteria</taxon>
        <taxon>Rhodospirillales</taxon>
        <taxon>Rhodospirillaceae</taxon>
        <taxon>Rhodospirillum</taxon>
    </lineage>
</organism>
<feature type="chain" id="PRO_0000296937" description="Putative manganese efflux pump MntP">
    <location>
        <begin position="1"/>
        <end position="193"/>
    </location>
</feature>
<feature type="transmembrane region" description="Helical" evidence="1">
    <location>
        <begin position="3"/>
        <end position="23"/>
    </location>
</feature>
<feature type="transmembrane region" description="Helical" evidence="1">
    <location>
        <begin position="39"/>
        <end position="59"/>
    </location>
</feature>
<feature type="transmembrane region" description="Helical" evidence="1">
    <location>
        <begin position="65"/>
        <end position="85"/>
    </location>
</feature>
<feature type="transmembrane region" description="Helical" evidence="1">
    <location>
        <begin position="113"/>
        <end position="133"/>
    </location>
</feature>
<feature type="transmembrane region" description="Helical" evidence="1">
    <location>
        <begin position="138"/>
        <end position="158"/>
    </location>
</feature>
<feature type="transmembrane region" description="Helical" evidence="1">
    <location>
        <begin position="173"/>
        <end position="193"/>
    </location>
</feature>
<gene>
    <name evidence="1" type="primary">mntP</name>
    <name type="ordered locus">Rru_A0282</name>
</gene>
<keyword id="KW-0997">Cell inner membrane</keyword>
<keyword id="KW-1003">Cell membrane</keyword>
<keyword id="KW-0406">Ion transport</keyword>
<keyword id="KW-0464">Manganese</keyword>
<keyword id="KW-0472">Membrane</keyword>
<keyword id="KW-1185">Reference proteome</keyword>
<keyword id="KW-0812">Transmembrane</keyword>
<keyword id="KW-1133">Transmembrane helix</keyword>
<keyword id="KW-0813">Transport</keyword>
<comment type="function">
    <text evidence="1">Probably functions as a manganese efflux pump.</text>
</comment>
<comment type="subcellular location">
    <subcellularLocation>
        <location evidence="1">Cell inner membrane</location>
        <topology evidence="1">Multi-pass membrane protein</topology>
    </subcellularLocation>
</comment>
<comment type="similarity">
    <text evidence="1">Belongs to the MntP (TC 9.B.29) family.</text>
</comment>
<sequence>MSLATLTVLGFSLSADAFAAALGKGAGARRPDLLEAFRVGAYFGAFEAAAPLIGWALGLTFAARIAAFDHWVAFTLLAGVGGHMVIAALRAPKAETAEASKARQKRALSPLRLALAALATSIDATAVGIGLAVTEVNILMACALIGAITTVVAAGGVLLGRGAGPLLGRKAEVLGGLALIGIGLKILIEHLSA</sequence>
<accession>Q2RXQ8</accession>
<name>MNTP_RHORT</name>
<reference key="1">
    <citation type="journal article" date="2011" name="Stand. Genomic Sci.">
        <title>Complete genome sequence of Rhodospirillum rubrum type strain (S1).</title>
        <authorList>
            <person name="Munk A.C."/>
            <person name="Copeland A."/>
            <person name="Lucas S."/>
            <person name="Lapidus A."/>
            <person name="Del Rio T.G."/>
            <person name="Barry K."/>
            <person name="Detter J.C."/>
            <person name="Hammon N."/>
            <person name="Israni S."/>
            <person name="Pitluck S."/>
            <person name="Brettin T."/>
            <person name="Bruce D."/>
            <person name="Han C."/>
            <person name="Tapia R."/>
            <person name="Gilna P."/>
            <person name="Schmutz J."/>
            <person name="Larimer F."/>
            <person name="Land M."/>
            <person name="Kyrpides N.C."/>
            <person name="Mavromatis K."/>
            <person name="Richardson P."/>
            <person name="Rohde M."/>
            <person name="Goeker M."/>
            <person name="Klenk H.P."/>
            <person name="Zhang Y."/>
            <person name="Roberts G.P."/>
            <person name="Reslewic S."/>
            <person name="Schwartz D.C."/>
        </authorList>
    </citation>
    <scope>NUCLEOTIDE SEQUENCE [LARGE SCALE GENOMIC DNA]</scope>
    <source>
        <strain>ATCC 11170 / ATH 1.1.1 / DSM 467 / LMG 4362 / NCIMB 8255 / S1</strain>
    </source>
</reference>
<dbReference type="EMBL" id="CP000230">
    <property type="protein sequence ID" value="ABC21087.1"/>
    <property type="molecule type" value="Genomic_DNA"/>
</dbReference>
<dbReference type="RefSeq" id="WP_011388035.1">
    <property type="nucleotide sequence ID" value="NC_007643.1"/>
</dbReference>
<dbReference type="RefSeq" id="YP_425374.1">
    <property type="nucleotide sequence ID" value="NC_007643.1"/>
</dbReference>
<dbReference type="STRING" id="269796.Rru_A0282"/>
<dbReference type="EnsemblBacteria" id="ABC21087">
    <property type="protein sequence ID" value="ABC21087"/>
    <property type="gene ID" value="Rru_A0282"/>
</dbReference>
<dbReference type="KEGG" id="rru:Rru_A0282"/>
<dbReference type="PATRIC" id="fig|269796.9.peg.337"/>
<dbReference type="eggNOG" id="COG1971">
    <property type="taxonomic scope" value="Bacteria"/>
</dbReference>
<dbReference type="HOGENOM" id="CLU_096410_0_0_5"/>
<dbReference type="PhylomeDB" id="Q2RXQ8"/>
<dbReference type="Proteomes" id="UP000001929">
    <property type="component" value="Chromosome"/>
</dbReference>
<dbReference type="GO" id="GO:0005886">
    <property type="term" value="C:plasma membrane"/>
    <property type="evidence" value="ECO:0007669"/>
    <property type="project" value="UniProtKB-SubCell"/>
</dbReference>
<dbReference type="GO" id="GO:0005384">
    <property type="term" value="F:manganese ion transmembrane transporter activity"/>
    <property type="evidence" value="ECO:0007669"/>
    <property type="project" value="UniProtKB-UniRule"/>
</dbReference>
<dbReference type="HAMAP" id="MF_01521">
    <property type="entry name" value="MntP_pump"/>
    <property type="match status" value="1"/>
</dbReference>
<dbReference type="InterPro" id="IPR003810">
    <property type="entry name" value="Mntp/YtaF"/>
</dbReference>
<dbReference type="InterPro" id="IPR022929">
    <property type="entry name" value="Put_MntP"/>
</dbReference>
<dbReference type="PANTHER" id="PTHR35529">
    <property type="entry name" value="MANGANESE EFFLUX PUMP MNTP-RELATED"/>
    <property type="match status" value="1"/>
</dbReference>
<dbReference type="PANTHER" id="PTHR35529:SF1">
    <property type="entry name" value="MANGANESE EFFLUX PUMP MNTP-RELATED"/>
    <property type="match status" value="1"/>
</dbReference>
<dbReference type="Pfam" id="PF02659">
    <property type="entry name" value="Mntp"/>
    <property type="match status" value="1"/>
</dbReference>
<protein>
    <recommendedName>
        <fullName evidence="1">Putative manganese efflux pump MntP</fullName>
    </recommendedName>
</protein>
<proteinExistence type="inferred from homology"/>